<feature type="chain" id="PRO_0000192150" description="Bifunctional purine biosynthesis protein PurH">
    <location>
        <begin position="1"/>
        <end position="527"/>
    </location>
</feature>
<feature type="domain" description="MGS-like" evidence="2">
    <location>
        <begin position="1"/>
        <end position="149"/>
    </location>
</feature>
<proteinExistence type="inferred from homology"/>
<comment type="catalytic activity">
    <reaction evidence="1">
        <text>(6R)-10-formyltetrahydrofolate + 5-amino-1-(5-phospho-beta-D-ribosyl)imidazole-4-carboxamide = 5-formamido-1-(5-phospho-D-ribosyl)imidazole-4-carboxamide + (6S)-5,6,7,8-tetrahydrofolate</text>
        <dbReference type="Rhea" id="RHEA:22192"/>
        <dbReference type="ChEBI" id="CHEBI:57453"/>
        <dbReference type="ChEBI" id="CHEBI:58467"/>
        <dbReference type="ChEBI" id="CHEBI:58475"/>
        <dbReference type="ChEBI" id="CHEBI:195366"/>
        <dbReference type="EC" id="2.1.2.3"/>
    </reaction>
</comment>
<comment type="catalytic activity">
    <reaction evidence="1">
        <text>IMP + H2O = 5-formamido-1-(5-phospho-D-ribosyl)imidazole-4-carboxamide</text>
        <dbReference type="Rhea" id="RHEA:18445"/>
        <dbReference type="ChEBI" id="CHEBI:15377"/>
        <dbReference type="ChEBI" id="CHEBI:58053"/>
        <dbReference type="ChEBI" id="CHEBI:58467"/>
        <dbReference type="EC" id="3.5.4.10"/>
    </reaction>
</comment>
<comment type="pathway">
    <text evidence="1">Purine metabolism; IMP biosynthesis via de novo pathway; 5-formamido-1-(5-phospho-D-ribosyl)imidazole-4-carboxamide from 5-amino-1-(5-phospho-D-ribosyl)imidazole-4-carboxamide (10-formyl THF route): step 1/1.</text>
</comment>
<comment type="pathway">
    <text evidence="1">Purine metabolism; IMP biosynthesis via de novo pathway; IMP from 5-formamido-1-(5-phospho-D-ribosyl)imidazole-4-carboxamide: step 1/1.</text>
</comment>
<comment type="domain">
    <text evidence="1">The IMP cyclohydrolase activity resides in the N-terminal region.</text>
</comment>
<comment type="similarity">
    <text evidence="1">Belongs to the PurH family.</text>
</comment>
<name>PUR9_XANCP</name>
<organism>
    <name type="scientific">Xanthomonas campestris pv. campestris (strain ATCC 33913 / DSM 3586 / NCPPB 528 / LMG 568 / P 25)</name>
    <dbReference type="NCBI Taxonomy" id="190485"/>
    <lineage>
        <taxon>Bacteria</taxon>
        <taxon>Pseudomonadati</taxon>
        <taxon>Pseudomonadota</taxon>
        <taxon>Gammaproteobacteria</taxon>
        <taxon>Lysobacterales</taxon>
        <taxon>Lysobacteraceae</taxon>
        <taxon>Xanthomonas</taxon>
    </lineage>
</organism>
<keyword id="KW-0378">Hydrolase</keyword>
<keyword id="KW-0511">Multifunctional enzyme</keyword>
<keyword id="KW-0658">Purine biosynthesis</keyword>
<keyword id="KW-1185">Reference proteome</keyword>
<keyword id="KW-0808">Transferase</keyword>
<reference key="1">
    <citation type="journal article" date="2002" name="Nature">
        <title>Comparison of the genomes of two Xanthomonas pathogens with differing host specificities.</title>
        <authorList>
            <person name="da Silva A.C.R."/>
            <person name="Ferro J.A."/>
            <person name="Reinach F.C."/>
            <person name="Farah C.S."/>
            <person name="Furlan L.R."/>
            <person name="Quaggio R.B."/>
            <person name="Monteiro-Vitorello C.B."/>
            <person name="Van Sluys M.A."/>
            <person name="Almeida N.F. Jr."/>
            <person name="Alves L.M.C."/>
            <person name="do Amaral A.M."/>
            <person name="Bertolini M.C."/>
            <person name="Camargo L.E.A."/>
            <person name="Camarotte G."/>
            <person name="Cannavan F."/>
            <person name="Cardozo J."/>
            <person name="Chambergo F."/>
            <person name="Ciapina L.P."/>
            <person name="Cicarelli R.M.B."/>
            <person name="Coutinho L.L."/>
            <person name="Cursino-Santos J.R."/>
            <person name="El-Dorry H."/>
            <person name="Faria J.B."/>
            <person name="Ferreira A.J.S."/>
            <person name="Ferreira R.C.C."/>
            <person name="Ferro M.I.T."/>
            <person name="Formighieri E.F."/>
            <person name="Franco M.C."/>
            <person name="Greggio C.C."/>
            <person name="Gruber A."/>
            <person name="Katsuyama A.M."/>
            <person name="Kishi L.T."/>
            <person name="Leite R.P."/>
            <person name="Lemos E.G.M."/>
            <person name="Lemos M.V.F."/>
            <person name="Locali E.C."/>
            <person name="Machado M.A."/>
            <person name="Madeira A.M.B.N."/>
            <person name="Martinez-Rossi N.M."/>
            <person name="Martins E.C."/>
            <person name="Meidanis J."/>
            <person name="Menck C.F.M."/>
            <person name="Miyaki C.Y."/>
            <person name="Moon D.H."/>
            <person name="Moreira L.M."/>
            <person name="Novo M.T.M."/>
            <person name="Okura V.K."/>
            <person name="Oliveira M.C."/>
            <person name="Oliveira V.R."/>
            <person name="Pereira H.A."/>
            <person name="Rossi A."/>
            <person name="Sena J.A.D."/>
            <person name="Silva C."/>
            <person name="de Souza R.F."/>
            <person name="Spinola L.A.F."/>
            <person name="Takita M.A."/>
            <person name="Tamura R.E."/>
            <person name="Teixeira E.C."/>
            <person name="Tezza R.I.D."/>
            <person name="Trindade dos Santos M."/>
            <person name="Truffi D."/>
            <person name="Tsai S.M."/>
            <person name="White F.F."/>
            <person name="Setubal J.C."/>
            <person name="Kitajima J.P."/>
        </authorList>
    </citation>
    <scope>NUCLEOTIDE SEQUENCE [LARGE SCALE GENOMIC DNA]</scope>
    <source>
        <strain>ATCC 33913 / DSM 3586 / NCPPB 528 / LMG 568 / P 25</strain>
    </source>
</reference>
<protein>
    <recommendedName>
        <fullName evidence="1">Bifunctional purine biosynthesis protein PurH</fullName>
    </recommendedName>
    <domain>
        <recommendedName>
            <fullName evidence="1">Phosphoribosylaminoimidazolecarboxamide formyltransferase</fullName>
            <ecNumber evidence="1">2.1.2.3</ecNumber>
        </recommendedName>
        <alternativeName>
            <fullName evidence="1">AICAR transformylase</fullName>
        </alternativeName>
    </domain>
    <domain>
        <recommendedName>
            <fullName evidence="1">IMP cyclohydrolase</fullName>
            <ecNumber evidence="1">3.5.4.10</ecNumber>
        </recommendedName>
        <alternativeName>
            <fullName evidence="1">ATIC</fullName>
        </alternativeName>
        <alternativeName>
            <fullName evidence="1">IMP synthase</fullName>
        </alternativeName>
        <alternativeName>
            <fullName evidence="1">Inosinicase</fullName>
        </alternativeName>
    </domain>
</protein>
<sequence>MASDFLPVRRALLSVSDKTGLIDLARALVARNVELLSTGGTAKAIRDAGLPVKDVAELTGFPEMMDGRVKTLHPLVHGGLLGRAGVDEAVMAEHGIAPIDLLVLNLYPFESVTAKADCTLADAVENIDIGGPAMLRSAAKNFARVAVATDPAQYADLLAELEANNGQLSAAQRFALSVAAFNRVAQYDAAISNYLSAVADSAESVPTRSPFPAQINSNFIKVMDLRYGENPHQSGAFYRDLYPVPGTLATFQQLQGKELSYNNLADADAAWECVRQFDAPACVIVKHANPCGVAVGVACGDAYELAYATDPTSAFGGILAFNRTLDAATAKAILDRQFVEVLIAPDYEPGALDYATKKANVRVLKIPHGAGLNNYDTKRIGSGLLMQSADNRGMSLGELSVVTKRAPSDAELADLLFAWRVAKYVKSNAIVYAKDSRTIGVGAGQMSRVVSAKIAALKAEEAKLTVAGSVMASDAFFPFRDGIDAAAAAGIQAVIQPGGSMRDGEVIAAADEHGLAMVFTGVRHFRH</sequence>
<gene>
    <name evidence="1" type="primary">purH</name>
    <name type="ordered locus">XCC0498</name>
</gene>
<evidence type="ECO:0000255" key="1">
    <source>
        <dbReference type="HAMAP-Rule" id="MF_00139"/>
    </source>
</evidence>
<evidence type="ECO:0000255" key="2">
    <source>
        <dbReference type="PROSITE-ProRule" id="PRU01202"/>
    </source>
</evidence>
<accession>Q8PD47</accession>
<dbReference type="EC" id="2.1.2.3" evidence="1"/>
<dbReference type="EC" id="3.5.4.10" evidence="1"/>
<dbReference type="EMBL" id="AE008922">
    <property type="protein sequence ID" value="AAM39814.1"/>
    <property type="molecule type" value="Genomic_DNA"/>
</dbReference>
<dbReference type="RefSeq" id="NP_635890.1">
    <property type="nucleotide sequence ID" value="NC_003902.1"/>
</dbReference>
<dbReference type="RefSeq" id="WP_011035747.1">
    <property type="nucleotide sequence ID" value="NC_003902.1"/>
</dbReference>
<dbReference type="SMR" id="Q8PD47"/>
<dbReference type="STRING" id="190485.XCC0498"/>
<dbReference type="EnsemblBacteria" id="AAM39814">
    <property type="protein sequence ID" value="AAM39814"/>
    <property type="gene ID" value="XCC0498"/>
</dbReference>
<dbReference type="KEGG" id="xcc:XCC0498"/>
<dbReference type="PATRIC" id="fig|190485.4.peg.546"/>
<dbReference type="eggNOG" id="COG0138">
    <property type="taxonomic scope" value="Bacteria"/>
</dbReference>
<dbReference type="HOGENOM" id="CLU_016316_5_2_6"/>
<dbReference type="OrthoDB" id="9802065at2"/>
<dbReference type="UniPathway" id="UPA00074">
    <property type="reaction ID" value="UER00133"/>
</dbReference>
<dbReference type="UniPathway" id="UPA00074">
    <property type="reaction ID" value="UER00135"/>
</dbReference>
<dbReference type="Proteomes" id="UP000001010">
    <property type="component" value="Chromosome"/>
</dbReference>
<dbReference type="GO" id="GO:0005829">
    <property type="term" value="C:cytosol"/>
    <property type="evidence" value="ECO:0000318"/>
    <property type="project" value="GO_Central"/>
</dbReference>
<dbReference type="GO" id="GO:0003937">
    <property type="term" value="F:IMP cyclohydrolase activity"/>
    <property type="evidence" value="ECO:0000318"/>
    <property type="project" value="GO_Central"/>
</dbReference>
<dbReference type="GO" id="GO:0004643">
    <property type="term" value="F:phosphoribosylaminoimidazolecarboxamide formyltransferase activity"/>
    <property type="evidence" value="ECO:0000318"/>
    <property type="project" value="GO_Central"/>
</dbReference>
<dbReference type="GO" id="GO:0006189">
    <property type="term" value="P:'de novo' IMP biosynthetic process"/>
    <property type="evidence" value="ECO:0000318"/>
    <property type="project" value="GO_Central"/>
</dbReference>
<dbReference type="CDD" id="cd01421">
    <property type="entry name" value="IMPCH"/>
    <property type="match status" value="1"/>
</dbReference>
<dbReference type="FunFam" id="3.40.140.20:FF:000001">
    <property type="entry name" value="Bifunctional purine biosynthesis protein PurH"/>
    <property type="match status" value="1"/>
</dbReference>
<dbReference type="FunFam" id="3.40.140.20:FF:000002">
    <property type="entry name" value="Bifunctional purine biosynthesis protein PurH"/>
    <property type="match status" value="1"/>
</dbReference>
<dbReference type="FunFam" id="3.40.50.1380:FF:000001">
    <property type="entry name" value="Bifunctional purine biosynthesis protein PurH"/>
    <property type="match status" value="1"/>
</dbReference>
<dbReference type="Gene3D" id="3.40.140.20">
    <property type="match status" value="2"/>
</dbReference>
<dbReference type="Gene3D" id="3.40.50.1380">
    <property type="entry name" value="Methylglyoxal synthase-like domain"/>
    <property type="match status" value="1"/>
</dbReference>
<dbReference type="HAMAP" id="MF_00139">
    <property type="entry name" value="PurH"/>
    <property type="match status" value="1"/>
</dbReference>
<dbReference type="InterPro" id="IPR024051">
    <property type="entry name" value="AICAR_Tfase_dup_dom_sf"/>
</dbReference>
<dbReference type="InterPro" id="IPR016193">
    <property type="entry name" value="Cytidine_deaminase-like"/>
</dbReference>
<dbReference type="InterPro" id="IPR011607">
    <property type="entry name" value="MGS-like_dom"/>
</dbReference>
<dbReference type="InterPro" id="IPR036914">
    <property type="entry name" value="MGS-like_dom_sf"/>
</dbReference>
<dbReference type="InterPro" id="IPR002695">
    <property type="entry name" value="PurH-like"/>
</dbReference>
<dbReference type="NCBIfam" id="NF002049">
    <property type="entry name" value="PRK00881.1"/>
    <property type="match status" value="1"/>
</dbReference>
<dbReference type="NCBIfam" id="TIGR00355">
    <property type="entry name" value="purH"/>
    <property type="match status" value="1"/>
</dbReference>
<dbReference type="PANTHER" id="PTHR11692:SF0">
    <property type="entry name" value="BIFUNCTIONAL PURINE BIOSYNTHESIS PROTEIN ATIC"/>
    <property type="match status" value="1"/>
</dbReference>
<dbReference type="PANTHER" id="PTHR11692">
    <property type="entry name" value="BIFUNCTIONAL PURINE BIOSYNTHESIS PROTEIN PURH"/>
    <property type="match status" value="1"/>
</dbReference>
<dbReference type="Pfam" id="PF01808">
    <property type="entry name" value="AICARFT_IMPCHas"/>
    <property type="match status" value="1"/>
</dbReference>
<dbReference type="Pfam" id="PF02142">
    <property type="entry name" value="MGS"/>
    <property type="match status" value="1"/>
</dbReference>
<dbReference type="PIRSF" id="PIRSF000414">
    <property type="entry name" value="AICARFT_IMPCHas"/>
    <property type="match status" value="1"/>
</dbReference>
<dbReference type="SMART" id="SM00798">
    <property type="entry name" value="AICARFT_IMPCHas"/>
    <property type="match status" value="1"/>
</dbReference>
<dbReference type="SMART" id="SM00851">
    <property type="entry name" value="MGS"/>
    <property type="match status" value="1"/>
</dbReference>
<dbReference type="SUPFAM" id="SSF53927">
    <property type="entry name" value="Cytidine deaminase-like"/>
    <property type="match status" value="1"/>
</dbReference>
<dbReference type="SUPFAM" id="SSF52335">
    <property type="entry name" value="Methylglyoxal synthase-like"/>
    <property type="match status" value="1"/>
</dbReference>
<dbReference type="PROSITE" id="PS51855">
    <property type="entry name" value="MGS"/>
    <property type="match status" value="1"/>
</dbReference>